<name>HFQ_SHEHH</name>
<reference key="1">
    <citation type="submission" date="2008-01" db="EMBL/GenBank/DDBJ databases">
        <title>Complete sequence of Shewanella halifaxensis HAW-EB4.</title>
        <authorList>
            <consortium name="US DOE Joint Genome Institute"/>
            <person name="Copeland A."/>
            <person name="Lucas S."/>
            <person name="Lapidus A."/>
            <person name="Glavina del Rio T."/>
            <person name="Dalin E."/>
            <person name="Tice H."/>
            <person name="Bruce D."/>
            <person name="Goodwin L."/>
            <person name="Pitluck S."/>
            <person name="Sims D."/>
            <person name="Brettin T."/>
            <person name="Detter J.C."/>
            <person name="Han C."/>
            <person name="Kuske C.R."/>
            <person name="Schmutz J."/>
            <person name="Larimer F."/>
            <person name="Land M."/>
            <person name="Hauser L."/>
            <person name="Kyrpides N."/>
            <person name="Kim E."/>
            <person name="Zhao J.-S."/>
            <person name="Richardson P."/>
        </authorList>
    </citation>
    <scope>NUCLEOTIDE SEQUENCE [LARGE SCALE GENOMIC DNA]</scope>
    <source>
        <strain>HAW-EB4</strain>
    </source>
</reference>
<feature type="chain" id="PRO_1000080689" description="RNA-binding protein Hfq">
    <location>
        <begin position="1"/>
        <end position="92"/>
    </location>
</feature>
<feature type="domain" description="Sm" evidence="2">
    <location>
        <begin position="9"/>
        <end position="68"/>
    </location>
</feature>
<organism>
    <name type="scientific">Shewanella halifaxensis (strain HAW-EB4)</name>
    <dbReference type="NCBI Taxonomy" id="458817"/>
    <lineage>
        <taxon>Bacteria</taxon>
        <taxon>Pseudomonadati</taxon>
        <taxon>Pseudomonadota</taxon>
        <taxon>Gammaproteobacteria</taxon>
        <taxon>Alteromonadales</taxon>
        <taxon>Shewanellaceae</taxon>
        <taxon>Shewanella</taxon>
    </lineage>
</organism>
<accession>B0TU64</accession>
<dbReference type="EMBL" id="CP000931">
    <property type="protein sequence ID" value="ABZ78175.1"/>
    <property type="molecule type" value="Genomic_DNA"/>
</dbReference>
<dbReference type="RefSeq" id="WP_012278694.1">
    <property type="nucleotide sequence ID" value="NC_010334.1"/>
</dbReference>
<dbReference type="SMR" id="B0TU64"/>
<dbReference type="STRING" id="458817.Shal_3634"/>
<dbReference type="KEGG" id="shl:Shal_3634"/>
<dbReference type="eggNOG" id="COG1923">
    <property type="taxonomic scope" value="Bacteria"/>
</dbReference>
<dbReference type="HOGENOM" id="CLU_113688_2_2_6"/>
<dbReference type="OrthoDB" id="9799751at2"/>
<dbReference type="Proteomes" id="UP000001317">
    <property type="component" value="Chromosome"/>
</dbReference>
<dbReference type="GO" id="GO:0005829">
    <property type="term" value="C:cytosol"/>
    <property type="evidence" value="ECO:0007669"/>
    <property type="project" value="TreeGrafter"/>
</dbReference>
<dbReference type="GO" id="GO:0003723">
    <property type="term" value="F:RNA binding"/>
    <property type="evidence" value="ECO:0007669"/>
    <property type="project" value="UniProtKB-UniRule"/>
</dbReference>
<dbReference type="GO" id="GO:0006355">
    <property type="term" value="P:regulation of DNA-templated transcription"/>
    <property type="evidence" value="ECO:0007669"/>
    <property type="project" value="InterPro"/>
</dbReference>
<dbReference type="GO" id="GO:0043487">
    <property type="term" value="P:regulation of RNA stability"/>
    <property type="evidence" value="ECO:0007669"/>
    <property type="project" value="TreeGrafter"/>
</dbReference>
<dbReference type="GO" id="GO:0045974">
    <property type="term" value="P:regulation of translation, ncRNA-mediated"/>
    <property type="evidence" value="ECO:0007669"/>
    <property type="project" value="TreeGrafter"/>
</dbReference>
<dbReference type="CDD" id="cd01716">
    <property type="entry name" value="Hfq"/>
    <property type="match status" value="1"/>
</dbReference>
<dbReference type="FunFam" id="2.30.30.100:FF:000001">
    <property type="entry name" value="RNA-binding protein Hfq"/>
    <property type="match status" value="1"/>
</dbReference>
<dbReference type="Gene3D" id="2.30.30.100">
    <property type="match status" value="1"/>
</dbReference>
<dbReference type="HAMAP" id="MF_00436">
    <property type="entry name" value="Hfq"/>
    <property type="match status" value="1"/>
</dbReference>
<dbReference type="InterPro" id="IPR005001">
    <property type="entry name" value="Hfq"/>
</dbReference>
<dbReference type="InterPro" id="IPR010920">
    <property type="entry name" value="LSM_dom_sf"/>
</dbReference>
<dbReference type="InterPro" id="IPR047575">
    <property type="entry name" value="Sm"/>
</dbReference>
<dbReference type="NCBIfam" id="TIGR02383">
    <property type="entry name" value="Hfq"/>
    <property type="match status" value="1"/>
</dbReference>
<dbReference type="NCBIfam" id="NF001602">
    <property type="entry name" value="PRK00395.1"/>
    <property type="match status" value="1"/>
</dbReference>
<dbReference type="PANTHER" id="PTHR34772">
    <property type="entry name" value="RNA-BINDING PROTEIN HFQ"/>
    <property type="match status" value="1"/>
</dbReference>
<dbReference type="PANTHER" id="PTHR34772:SF1">
    <property type="entry name" value="RNA-BINDING PROTEIN HFQ"/>
    <property type="match status" value="1"/>
</dbReference>
<dbReference type="Pfam" id="PF17209">
    <property type="entry name" value="Hfq"/>
    <property type="match status" value="1"/>
</dbReference>
<dbReference type="SUPFAM" id="SSF50182">
    <property type="entry name" value="Sm-like ribonucleoproteins"/>
    <property type="match status" value="1"/>
</dbReference>
<dbReference type="PROSITE" id="PS52002">
    <property type="entry name" value="SM"/>
    <property type="match status" value="1"/>
</dbReference>
<proteinExistence type="inferred from homology"/>
<comment type="function">
    <text evidence="1">RNA chaperone that binds small regulatory RNA (sRNAs) and mRNAs to facilitate mRNA translational regulation in response to envelope stress, environmental stress and changes in metabolite concentrations. Also binds with high specificity to tRNAs.</text>
</comment>
<comment type="subunit">
    <text evidence="1">Homohexamer.</text>
</comment>
<comment type="similarity">
    <text evidence="1">Belongs to the Hfq family.</text>
</comment>
<evidence type="ECO:0000255" key="1">
    <source>
        <dbReference type="HAMAP-Rule" id="MF_00436"/>
    </source>
</evidence>
<evidence type="ECO:0000255" key="2">
    <source>
        <dbReference type="PROSITE-ProRule" id="PRU01346"/>
    </source>
</evidence>
<sequence length="92" mass="10241">MAKGQSLQDPFLNALRRERVPVSIYLVNGIKLQGQVESFDQFVILLKNTVSQMVYKHAISTVVPSRPFNVSNHQATNAQAGFNAQHDDGDDK</sequence>
<gene>
    <name evidence="1" type="primary">hfq</name>
    <name type="ordered locus">Shal_3634</name>
</gene>
<protein>
    <recommendedName>
        <fullName evidence="1">RNA-binding protein Hfq</fullName>
    </recommendedName>
</protein>
<keyword id="KW-0694">RNA-binding</keyword>
<keyword id="KW-0346">Stress response</keyword>